<keyword id="KW-0025">Alternative splicing</keyword>
<keyword id="KW-0472">Membrane</keyword>
<keyword id="KW-0520">NAD</keyword>
<keyword id="KW-0521">NADP</keyword>
<keyword id="KW-0560">Oxidoreductase</keyword>
<keyword id="KW-1185">Reference proteome</keyword>
<keyword id="KW-0703">Sarcoplasmic reticulum</keyword>
<keyword id="KW-0732">Signal</keyword>
<evidence type="ECO:0000250" key="1">
    <source>
        <dbReference type="UniProtKB" id="A6NNS2"/>
    </source>
</evidence>
<evidence type="ECO:0000250" key="2">
    <source>
        <dbReference type="UniProtKB" id="Q8CHS7"/>
    </source>
</evidence>
<evidence type="ECO:0000250" key="3">
    <source>
        <dbReference type="UniProtKB" id="Q99714"/>
    </source>
</evidence>
<evidence type="ECO:0000255" key="4"/>
<evidence type="ECO:0000255" key="5">
    <source>
        <dbReference type="PROSITE-ProRule" id="PRU10001"/>
    </source>
</evidence>
<evidence type="ECO:0000303" key="6">
    <source ref="2"/>
</evidence>
<evidence type="ECO:0000305" key="7"/>
<name>DRS7C_BOVIN</name>
<organism>
    <name type="scientific">Bos taurus</name>
    <name type="common">Bovine</name>
    <dbReference type="NCBI Taxonomy" id="9913"/>
    <lineage>
        <taxon>Eukaryota</taxon>
        <taxon>Metazoa</taxon>
        <taxon>Chordata</taxon>
        <taxon>Craniata</taxon>
        <taxon>Vertebrata</taxon>
        <taxon>Euteleostomi</taxon>
        <taxon>Mammalia</taxon>
        <taxon>Eutheria</taxon>
        <taxon>Laurasiatheria</taxon>
        <taxon>Artiodactyla</taxon>
        <taxon>Ruminantia</taxon>
        <taxon>Pecora</taxon>
        <taxon>Bovidae</taxon>
        <taxon>Bovinae</taxon>
        <taxon>Bos</taxon>
    </lineage>
</organism>
<gene>
    <name type="primary">DHRS7C</name>
    <name evidence="1" type="synonym">SDR32C2</name>
</gene>
<dbReference type="EC" id="1.1.1.105" evidence="2"/>
<dbReference type="EMBL" id="AAFC03081251">
    <property type="status" value="NOT_ANNOTATED_CDS"/>
    <property type="molecule type" value="Genomic_DNA"/>
</dbReference>
<dbReference type="EMBL" id="BC114860">
    <property type="protein sequence ID" value="AAI14861.1"/>
    <property type="molecule type" value="mRNA"/>
</dbReference>
<dbReference type="RefSeq" id="NP_001069013.1">
    <molecule id="Q1RMJ5-2"/>
    <property type="nucleotide sequence ID" value="NM_001075545.1"/>
</dbReference>
<dbReference type="RefSeq" id="XP_005220401.1">
    <molecule id="Q1RMJ5-1"/>
    <property type="nucleotide sequence ID" value="XM_005220344.5"/>
</dbReference>
<dbReference type="SMR" id="Q1RMJ5"/>
<dbReference type="FunCoup" id="Q1RMJ5">
    <property type="interactions" value="74"/>
</dbReference>
<dbReference type="STRING" id="9913.ENSBTAP00000006658"/>
<dbReference type="PaxDb" id="9913-ENSBTAP00000006658"/>
<dbReference type="Ensembl" id="ENSBTAT00000044540.3">
    <molecule id="Q1RMJ5-2"/>
    <property type="protein sequence ID" value="ENSBTAP00000042030.1"/>
    <property type="gene ID" value="ENSBTAG00000005048.6"/>
</dbReference>
<dbReference type="GeneID" id="511943"/>
<dbReference type="KEGG" id="bta:511943"/>
<dbReference type="CTD" id="201140"/>
<dbReference type="VEuPathDB" id="HostDB:ENSBTAG00000005048"/>
<dbReference type="eggNOG" id="KOG1205">
    <property type="taxonomic scope" value="Eukaryota"/>
</dbReference>
<dbReference type="GeneTree" id="ENSGT00940000157100"/>
<dbReference type="HOGENOM" id="CLU_010194_2_1_1"/>
<dbReference type="InParanoid" id="Q1RMJ5"/>
<dbReference type="OMA" id="NIMDVNY"/>
<dbReference type="OrthoDB" id="5307821at2759"/>
<dbReference type="TreeFam" id="TF313474"/>
<dbReference type="Proteomes" id="UP000009136">
    <property type="component" value="Chromosome 19"/>
</dbReference>
<dbReference type="Bgee" id="ENSBTAG00000005048">
    <property type="expression patterns" value="Expressed in biceps femoris and 51 other cell types or tissues"/>
</dbReference>
<dbReference type="GO" id="GO:0014801">
    <property type="term" value="C:longitudinal sarcoplasmic reticulum"/>
    <property type="evidence" value="ECO:0000250"/>
    <property type="project" value="UniProtKB"/>
</dbReference>
<dbReference type="GO" id="GO:0033017">
    <property type="term" value="C:sarcoplasmic reticulum membrane"/>
    <property type="evidence" value="ECO:0000250"/>
    <property type="project" value="UniProtKB"/>
</dbReference>
<dbReference type="GO" id="GO:0004745">
    <property type="term" value="F:all-trans-retinol dehydrogenase (NAD+) activity"/>
    <property type="evidence" value="ECO:0000250"/>
    <property type="project" value="UniProtKB"/>
</dbReference>
<dbReference type="GO" id="GO:0016616">
    <property type="term" value="F:oxidoreductase activity, acting on the CH-OH group of donors, NAD or NADP as acceptor"/>
    <property type="evidence" value="ECO:0000318"/>
    <property type="project" value="GO_Central"/>
</dbReference>
<dbReference type="GO" id="GO:0046323">
    <property type="term" value="P:D-glucose import"/>
    <property type="evidence" value="ECO:0000250"/>
    <property type="project" value="UniProtKB"/>
</dbReference>
<dbReference type="GO" id="GO:0006874">
    <property type="term" value="P:intracellular calcium ion homeostasis"/>
    <property type="evidence" value="ECO:0000250"/>
    <property type="project" value="UniProtKB"/>
</dbReference>
<dbReference type="GO" id="GO:0010880">
    <property type="term" value="P:regulation of release of sequestered calcium ion into cytosol by sarcoplasmic reticulum"/>
    <property type="evidence" value="ECO:0000250"/>
    <property type="project" value="UniProtKB"/>
</dbReference>
<dbReference type="CDD" id="cd05332">
    <property type="entry name" value="11beta-HSD1_like_SDR_c"/>
    <property type="match status" value="1"/>
</dbReference>
<dbReference type="FunFam" id="3.40.50.720:FF:000122">
    <property type="entry name" value="Dehydrogenase/reductase SDR family member 7B"/>
    <property type="match status" value="1"/>
</dbReference>
<dbReference type="Gene3D" id="3.40.50.720">
    <property type="entry name" value="NAD(P)-binding Rossmann-like Domain"/>
    <property type="match status" value="1"/>
</dbReference>
<dbReference type="InterPro" id="IPR036291">
    <property type="entry name" value="NAD(P)-bd_dom_sf"/>
</dbReference>
<dbReference type="InterPro" id="IPR020904">
    <property type="entry name" value="Sc_DH/Rdtase_CS"/>
</dbReference>
<dbReference type="InterPro" id="IPR002347">
    <property type="entry name" value="SDR_fam"/>
</dbReference>
<dbReference type="InterPro" id="IPR052148">
    <property type="entry name" value="SDR_family_member_7C"/>
</dbReference>
<dbReference type="PANTHER" id="PTHR44668">
    <property type="match status" value="1"/>
</dbReference>
<dbReference type="PANTHER" id="PTHR44668:SF2">
    <property type="entry name" value="DEHYDROGENASE_REDUCTASE SDR FAMILY MEMBER 7C"/>
    <property type="match status" value="1"/>
</dbReference>
<dbReference type="Pfam" id="PF00106">
    <property type="entry name" value="adh_short"/>
    <property type="match status" value="1"/>
</dbReference>
<dbReference type="PRINTS" id="PR00081">
    <property type="entry name" value="GDHRDH"/>
</dbReference>
<dbReference type="PRINTS" id="PR00080">
    <property type="entry name" value="SDRFAMILY"/>
</dbReference>
<dbReference type="SUPFAM" id="SSF51735">
    <property type="entry name" value="NAD(P)-binding Rossmann-fold domains"/>
    <property type="match status" value="1"/>
</dbReference>
<dbReference type="PROSITE" id="PS00061">
    <property type="entry name" value="ADH_SHORT"/>
    <property type="match status" value="1"/>
</dbReference>
<proteinExistence type="evidence at transcript level"/>
<protein>
    <recommendedName>
        <fullName evidence="2">Dehydrogenase/reductase SDR family member 7C</fullName>
        <ecNumber evidence="2">1.1.1.105</ecNumber>
    </recommendedName>
    <alternativeName>
        <fullName evidence="2">Sarcoplasmic reticulum protein of 35 kDa</fullName>
        <shortName evidence="2">Protein SRP-35</shortName>
    </alternativeName>
    <alternativeName>
        <fullName evidence="1">Short-chain dehydrogenase/reductase family 32C member 2</fullName>
        <shortName evidence="1">Protein SDR32C2</shortName>
    </alternativeName>
</protein>
<reference key="1">
    <citation type="journal article" date="2009" name="Science">
        <title>The genome sequence of taurine cattle: a window to ruminant biology and evolution.</title>
        <authorList>
            <consortium name="The bovine genome sequencing and analysis consortium"/>
        </authorList>
    </citation>
    <scope>NUCLEOTIDE SEQUENCE [LARGE SCALE GENOMIC DNA]</scope>
    <source>
        <strain>Hereford</strain>
    </source>
</reference>
<reference key="2">
    <citation type="submission" date="2006-04" db="EMBL/GenBank/DDBJ databases">
        <authorList>
            <consortium name="NIH - Mammalian Gene Collection (MGC) project"/>
        </authorList>
    </citation>
    <scope>NUCLEOTIDE SEQUENCE [LARGE SCALE MRNA] (ISOFORM 2)</scope>
    <source>
        <strain>Hereford</strain>
        <tissue>Heart ventricle</tissue>
    </source>
</reference>
<sequence>MGVTAVLMLPLLLLGISGLLFIYQEVSRLWSKSVVQNKVVVITDAISGLGKECARVFHTGGARLVLCGKNWERLQSLYDALISVADPSKTFTPKLVLLDLSDISCVQDVAKEVLDCYGCVDILINNASVKVKGPAHKISLELDKKIMDANYFGPIILTKALLPDMISRRTGQIVLVNNIQGKLGIPFRTAYAASKHAALGFFDCLRAEVEEYDVVVSTVSPTFIRSYHVDPGQGNWEASIWKFFFRKLTYGTHPVDVAEEVMRTVRRKKQEVFLANPIPKAAVYIRTLFPELFFAVVACGVKEKLSVPEEG</sequence>
<feature type="signal peptide" evidence="4">
    <location>
        <begin position="1"/>
        <end position="18"/>
    </location>
</feature>
<feature type="chain" id="PRO_0000333754" description="Dehydrogenase/reductase SDR family member 7C">
    <location>
        <begin position="19"/>
        <end position="311"/>
    </location>
</feature>
<feature type="active site" description="Proton acceptor" evidence="5">
    <location>
        <position position="191"/>
    </location>
</feature>
<feature type="binding site" evidence="3">
    <location>
        <position position="47"/>
    </location>
    <ligand>
        <name>NAD(+)</name>
        <dbReference type="ChEBI" id="CHEBI:57540"/>
    </ligand>
</feature>
<feature type="binding site" evidence="3">
    <location>
        <position position="49"/>
    </location>
    <ligand>
        <name>NAD(+)</name>
        <dbReference type="ChEBI" id="CHEBI:57540"/>
    </ligand>
</feature>
<feature type="binding site" evidence="3">
    <location>
        <position position="191"/>
    </location>
    <ligand>
        <name>NAD(+)</name>
        <dbReference type="ChEBI" id="CHEBI:57540"/>
    </ligand>
</feature>
<feature type="binding site" evidence="3">
    <location>
        <position position="195"/>
    </location>
    <ligand>
        <name>NAD(+)</name>
        <dbReference type="ChEBI" id="CHEBI:57540"/>
    </ligand>
</feature>
<feature type="binding site" evidence="3">
    <location>
        <position position="226"/>
    </location>
    <ligand>
        <name>NAD(+)</name>
        <dbReference type="ChEBI" id="CHEBI:57540"/>
    </ligand>
</feature>
<feature type="splice variant" id="VSP_033520" description="In isoform 2." evidence="6">
    <location>
        <begin position="191"/>
        <end position="242"/>
    </location>
</feature>
<accession>Q1RMJ5</accession>
<comment type="function">
    <text evidence="2">NADH-dependent oxidoreductase which catalyzes the oxidation of all-trans-retinol to all-trans-retinal. Plays a role in the regulation of cardiac and skeletal muscle metabolic functions. Maintains Ca(2+) intracellular homeostasis by repressing Ca(2+) release from the sarcoplasmic reticulum (SR) in myotubes, possibly through local alternations in NAD/NADH or retinol/retinal. Also plays a role in Ca(2+) homeostasis by controlling Ca(2+) overload in the cytosol and the SR in myotubes. Involved in glucose uptake into skeletal muscles and muscle performance by activating PI3K and mTORC2-mediated AKT1 phosphorylation signaling pathways, possibly through the action of its downstream catalytic product all-trans-retinoic acid.</text>
</comment>
<comment type="catalytic activity">
    <reaction evidence="2">
        <text>all-trans-retinol + NAD(+) = all-trans-retinal + NADH + H(+)</text>
        <dbReference type="Rhea" id="RHEA:21284"/>
        <dbReference type="ChEBI" id="CHEBI:15378"/>
        <dbReference type="ChEBI" id="CHEBI:17336"/>
        <dbReference type="ChEBI" id="CHEBI:17898"/>
        <dbReference type="ChEBI" id="CHEBI:57540"/>
        <dbReference type="ChEBI" id="CHEBI:57945"/>
        <dbReference type="EC" id="1.1.1.105"/>
    </reaction>
    <physiologicalReaction direction="left-to-right" evidence="2">
        <dbReference type="Rhea" id="RHEA:21285"/>
    </physiologicalReaction>
</comment>
<comment type="subcellular location">
    <subcellularLocation>
        <location evidence="2">Sarcoplasmic reticulum membrane</location>
    </subcellularLocation>
    <text evidence="2">The N-terminus region encompasses a short hydrophobic sequence bound to the sarcoplasmic reticulum membrane, whereas the C-terminus catalytic domain faces the myoplasm. In skeletal muscle, enriched in the longitudinal sarcoplasmic reticulum.</text>
</comment>
<comment type="alternative products">
    <event type="alternative splicing"/>
    <isoform>
        <id>Q1RMJ5-1</id>
        <name>1</name>
        <sequence type="displayed"/>
    </isoform>
    <isoform>
        <id>Q1RMJ5-2</id>
        <name>2</name>
        <sequence type="described" ref="VSP_033520"/>
    </isoform>
</comment>
<comment type="domain">
    <text evidence="2">The N-terminus region encompasses a short hydrophobic sequence bound to the sarcoplasmic reticulum membrane, whereas the C-terminus catalytic domain faces the myoplasm.</text>
</comment>
<comment type="similarity">
    <text evidence="7">Belongs to the short-chain dehydrogenases/reductases (SDR) family.</text>
</comment>